<name>NUSB_SULDN</name>
<keyword id="KW-1185">Reference proteome</keyword>
<keyword id="KW-0694">RNA-binding</keyword>
<keyword id="KW-0804">Transcription</keyword>
<keyword id="KW-0889">Transcription antitermination</keyword>
<keyword id="KW-0805">Transcription regulation</keyword>
<accession>Q30TJ7</accession>
<organism>
    <name type="scientific">Sulfurimonas denitrificans (strain ATCC 33889 / DSM 1251)</name>
    <name type="common">Thiomicrospira denitrificans (strain ATCC 33889 / DSM 1251)</name>
    <dbReference type="NCBI Taxonomy" id="326298"/>
    <lineage>
        <taxon>Bacteria</taxon>
        <taxon>Pseudomonadati</taxon>
        <taxon>Campylobacterota</taxon>
        <taxon>Epsilonproteobacteria</taxon>
        <taxon>Campylobacterales</taxon>
        <taxon>Sulfurimonadaceae</taxon>
        <taxon>Sulfurimonas</taxon>
    </lineage>
</organism>
<reference key="1">
    <citation type="journal article" date="2008" name="Appl. Environ. Microbiol.">
        <title>Genome of the epsilonproteobacterial chemolithoautotroph Sulfurimonas denitrificans.</title>
        <authorList>
            <person name="Sievert S.M."/>
            <person name="Scott K.M."/>
            <person name="Klotz M.G."/>
            <person name="Chain P.S.G."/>
            <person name="Hauser L.J."/>
            <person name="Hemp J."/>
            <person name="Huegler M."/>
            <person name="Land M."/>
            <person name="Lapidus A."/>
            <person name="Larimer F.W."/>
            <person name="Lucas S."/>
            <person name="Malfatti S.A."/>
            <person name="Meyer F."/>
            <person name="Paulsen I.T."/>
            <person name="Ren Q."/>
            <person name="Simon J."/>
            <person name="Bailey K."/>
            <person name="Diaz E."/>
            <person name="Fitzpatrick K.A."/>
            <person name="Glover B."/>
            <person name="Gwatney N."/>
            <person name="Korajkic A."/>
            <person name="Long A."/>
            <person name="Mobberley J.M."/>
            <person name="Pantry S.N."/>
            <person name="Pazder G."/>
            <person name="Peterson S."/>
            <person name="Quintanilla J.D."/>
            <person name="Sprinkle R."/>
            <person name="Stephens J."/>
            <person name="Thomas P."/>
            <person name="Vaughn R."/>
            <person name="Weber M.J."/>
            <person name="Wooten L.L."/>
        </authorList>
    </citation>
    <scope>NUCLEOTIDE SEQUENCE [LARGE SCALE GENOMIC DNA]</scope>
    <source>
        <strain>ATCC 33889 / DSM 1251</strain>
    </source>
</reference>
<gene>
    <name evidence="1" type="primary">nusB</name>
    <name type="ordered locus">Suden_0403</name>
</gene>
<protein>
    <recommendedName>
        <fullName evidence="1">Transcription antitermination protein NusB</fullName>
    </recommendedName>
    <alternativeName>
        <fullName evidence="1">Antitermination factor NusB</fullName>
    </alternativeName>
</protein>
<sequence length="132" mass="14809">MATRHQARMAVVSLLYAFDLGNGNIAEHTDEILEEKKIRNKQKDFALTLYEGVMANITPVDEAIVKHLKDWDFERLGAIERATLRLATYEILFGELDSAVVINEAVEITKAFGTEQSPKFINGVLDAISKDK</sequence>
<feature type="chain" id="PRO_0000265621" description="Transcription antitermination protein NusB">
    <location>
        <begin position="1"/>
        <end position="132"/>
    </location>
</feature>
<proteinExistence type="inferred from homology"/>
<evidence type="ECO:0000255" key="1">
    <source>
        <dbReference type="HAMAP-Rule" id="MF_00073"/>
    </source>
</evidence>
<comment type="function">
    <text evidence="1">Involved in transcription antitermination. Required for transcription of ribosomal RNA (rRNA) genes. Binds specifically to the boxA antiterminator sequence of the ribosomal RNA (rrn) operons.</text>
</comment>
<comment type="similarity">
    <text evidence="1">Belongs to the NusB family.</text>
</comment>
<dbReference type="EMBL" id="CP000153">
    <property type="protein sequence ID" value="ABB43684.1"/>
    <property type="molecule type" value="Genomic_DNA"/>
</dbReference>
<dbReference type="RefSeq" id="WP_011372038.1">
    <property type="nucleotide sequence ID" value="NC_007575.1"/>
</dbReference>
<dbReference type="SMR" id="Q30TJ7"/>
<dbReference type="STRING" id="326298.Suden_0403"/>
<dbReference type="KEGG" id="tdn:Suden_0403"/>
<dbReference type="eggNOG" id="COG0781">
    <property type="taxonomic scope" value="Bacteria"/>
</dbReference>
<dbReference type="HOGENOM" id="CLU_087843_3_3_7"/>
<dbReference type="OrthoDB" id="9797817at2"/>
<dbReference type="Proteomes" id="UP000002714">
    <property type="component" value="Chromosome"/>
</dbReference>
<dbReference type="GO" id="GO:0005829">
    <property type="term" value="C:cytosol"/>
    <property type="evidence" value="ECO:0007669"/>
    <property type="project" value="TreeGrafter"/>
</dbReference>
<dbReference type="GO" id="GO:0003723">
    <property type="term" value="F:RNA binding"/>
    <property type="evidence" value="ECO:0007669"/>
    <property type="project" value="UniProtKB-UniRule"/>
</dbReference>
<dbReference type="GO" id="GO:0006353">
    <property type="term" value="P:DNA-templated transcription termination"/>
    <property type="evidence" value="ECO:0007669"/>
    <property type="project" value="UniProtKB-UniRule"/>
</dbReference>
<dbReference type="GO" id="GO:0031564">
    <property type="term" value="P:transcription antitermination"/>
    <property type="evidence" value="ECO:0007669"/>
    <property type="project" value="UniProtKB-KW"/>
</dbReference>
<dbReference type="CDD" id="cd00619">
    <property type="entry name" value="Terminator_NusB"/>
    <property type="match status" value="1"/>
</dbReference>
<dbReference type="Gene3D" id="1.10.940.10">
    <property type="entry name" value="NusB-like"/>
    <property type="match status" value="1"/>
</dbReference>
<dbReference type="HAMAP" id="MF_00073">
    <property type="entry name" value="NusB"/>
    <property type="match status" value="1"/>
</dbReference>
<dbReference type="InterPro" id="IPR035926">
    <property type="entry name" value="NusB-like_sf"/>
</dbReference>
<dbReference type="InterPro" id="IPR011605">
    <property type="entry name" value="NusB_fam"/>
</dbReference>
<dbReference type="InterPro" id="IPR006027">
    <property type="entry name" value="NusB_RsmB_TIM44"/>
</dbReference>
<dbReference type="NCBIfam" id="TIGR01951">
    <property type="entry name" value="nusB"/>
    <property type="match status" value="1"/>
</dbReference>
<dbReference type="PANTHER" id="PTHR11078:SF3">
    <property type="entry name" value="ANTITERMINATION NUSB DOMAIN-CONTAINING PROTEIN"/>
    <property type="match status" value="1"/>
</dbReference>
<dbReference type="PANTHER" id="PTHR11078">
    <property type="entry name" value="N UTILIZATION SUBSTANCE PROTEIN B-RELATED"/>
    <property type="match status" value="1"/>
</dbReference>
<dbReference type="Pfam" id="PF01029">
    <property type="entry name" value="NusB"/>
    <property type="match status" value="1"/>
</dbReference>
<dbReference type="SUPFAM" id="SSF48013">
    <property type="entry name" value="NusB-like"/>
    <property type="match status" value="1"/>
</dbReference>